<reference key="1">
    <citation type="journal article" date="2008" name="Dev. Biol.">
        <title>Six1a is required for the onset of fast muscle differentiation in zebrafish.</title>
        <authorList>
            <person name="Bessarab D.A."/>
            <person name="Chong S.W."/>
            <person name="Srinivas B.P."/>
            <person name="Korzh V."/>
        </authorList>
    </citation>
    <scope>NUCLEOTIDE SEQUENCE [MRNA]</scope>
    <scope>DEVELOPMENTAL STAGE</scope>
    <source>
        <strain>AB</strain>
    </source>
</reference>
<reference key="2">
    <citation type="journal article" date="2013" name="Nature">
        <title>The zebrafish reference genome sequence and its relationship to the human genome.</title>
        <authorList>
            <person name="Howe K."/>
            <person name="Clark M.D."/>
            <person name="Torroja C.F."/>
            <person name="Torrance J."/>
            <person name="Berthelot C."/>
            <person name="Muffato M."/>
            <person name="Collins J.E."/>
            <person name="Humphray S."/>
            <person name="McLaren K."/>
            <person name="Matthews L."/>
            <person name="McLaren S."/>
            <person name="Sealy I."/>
            <person name="Caccamo M."/>
            <person name="Churcher C."/>
            <person name="Scott C."/>
            <person name="Barrett J.C."/>
            <person name="Koch R."/>
            <person name="Rauch G.J."/>
            <person name="White S."/>
            <person name="Chow W."/>
            <person name="Kilian B."/>
            <person name="Quintais L.T."/>
            <person name="Guerra-Assuncao J.A."/>
            <person name="Zhou Y."/>
            <person name="Gu Y."/>
            <person name="Yen J."/>
            <person name="Vogel J.H."/>
            <person name="Eyre T."/>
            <person name="Redmond S."/>
            <person name="Banerjee R."/>
            <person name="Chi J."/>
            <person name="Fu B."/>
            <person name="Langley E."/>
            <person name="Maguire S.F."/>
            <person name="Laird G.K."/>
            <person name="Lloyd D."/>
            <person name="Kenyon E."/>
            <person name="Donaldson S."/>
            <person name="Sehra H."/>
            <person name="Almeida-King J."/>
            <person name="Loveland J."/>
            <person name="Trevanion S."/>
            <person name="Jones M."/>
            <person name="Quail M."/>
            <person name="Willey D."/>
            <person name="Hunt A."/>
            <person name="Burton J."/>
            <person name="Sims S."/>
            <person name="McLay K."/>
            <person name="Plumb B."/>
            <person name="Davis J."/>
            <person name="Clee C."/>
            <person name="Oliver K."/>
            <person name="Clark R."/>
            <person name="Riddle C."/>
            <person name="Elliot D."/>
            <person name="Threadgold G."/>
            <person name="Harden G."/>
            <person name="Ware D."/>
            <person name="Begum S."/>
            <person name="Mortimore B."/>
            <person name="Kerry G."/>
            <person name="Heath P."/>
            <person name="Phillimore B."/>
            <person name="Tracey A."/>
            <person name="Corby N."/>
            <person name="Dunn M."/>
            <person name="Johnson C."/>
            <person name="Wood J."/>
            <person name="Clark S."/>
            <person name="Pelan S."/>
            <person name="Griffiths G."/>
            <person name="Smith M."/>
            <person name="Glithero R."/>
            <person name="Howden P."/>
            <person name="Barker N."/>
            <person name="Lloyd C."/>
            <person name="Stevens C."/>
            <person name="Harley J."/>
            <person name="Holt K."/>
            <person name="Panagiotidis G."/>
            <person name="Lovell J."/>
            <person name="Beasley H."/>
            <person name="Henderson C."/>
            <person name="Gordon D."/>
            <person name="Auger K."/>
            <person name="Wright D."/>
            <person name="Collins J."/>
            <person name="Raisen C."/>
            <person name="Dyer L."/>
            <person name="Leung K."/>
            <person name="Robertson L."/>
            <person name="Ambridge K."/>
            <person name="Leongamornlert D."/>
            <person name="McGuire S."/>
            <person name="Gilderthorp R."/>
            <person name="Griffiths C."/>
            <person name="Manthravadi D."/>
            <person name="Nichol S."/>
            <person name="Barker G."/>
            <person name="Whitehead S."/>
            <person name="Kay M."/>
            <person name="Brown J."/>
            <person name="Murnane C."/>
            <person name="Gray E."/>
            <person name="Humphries M."/>
            <person name="Sycamore N."/>
            <person name="Barker D."/>
            <person name="Saunders D."/>
            <person name="Wallis J."/>
            <person name="Babbage A."/>
            <person name="Hammond S."/>
            <person name="Mashreghi-Mohammadi M."/>
            <person name="Barr L."/>
            <person name="Martin S."/>
            <person name="Wray P."/>
            <person name="Ellington A."/>
            <person name="Matthews N."/>
            <person name="Ellwood M."/>
            <person name="Woodmansey R."/>
            <person name="Clark G."/>
            <person name="Cooper J."/>
            <person name="Tromans A."/>
            <person name="Grafham D."/>
            <person name="Skuce C."/>
            <person name="Pandian R."/>
            <person name="Andrews R."/>
            <person name="Harrison E."/>
            <person name="Kimberley A."/>
            <person name="Garnett J."/>
            <person name="Fosker N."/>
            <person name="Hall R."/>
            <person name="Garner P."/>
            <person name="Kelly D."/>
            <person name="Bird C."/>
            <person name="Palmer S."/>
            <person name="Gehring I."/>
            <person name="Berger A."/>
            <person name="Dooley C.M."/>
            <person name="Ersan-Urun Z."/>
            <person name="Eser C."/>
            <person name="Geiger H."/>
            <person name="Geisler M."/>
            <person name="Karotki L."/>
            <person name="Kirn A."/>
            <person name="Konantz J."/>
            <person name="Konantz M."/>
            <person name="Oberlander M."/>
            <person name="Rudolph-Geiger S."/>
            <person name="Teucke M."/>
            <person name="Lanz C."/>
            <person name="Raddatz G."/>
            <person name="Osoegawa K."/>
            <person name="Zhu B."/>
            <person name="Rapp A."/>
            <person name="Widaa S."/>
            <person name="Langford C."/>
            <person name="Yang F."/>
            <person name="Schuster S.C."/>
            <person name="Carter N.P."/>
            <person name="Harrow J."/>
            <person name="Ning Z."/>
            <person name="Herrero J."/>
            <person name="Searle S.M."/>
            <person name="Enright A."/>
            <person name="Geisler R."/>
            <person name="Plasterk R.H."/>
            <person name="Lee C."/>
            <person name="Westerfield M."/>
            <person name="de Jong P.J."/>
            <person name="Zon L.I."/>
            <person name="Postlethwait J.H."/>
            <person name="Nusslein-Volhard C."/>
            <person name="Hubbard T.J."/>
            <person name="Roest Crollius H."/>
            <person name="Rogers J."/>
            <person name="Stemple D.L."/>
        </authorList>
    </citation>
    <scope>NUCLEOTIDE SEQUENCE [LARGE SCALE GENOMIC DNA]</scope>
    <source>
        <strain>Tuebingen</strain>
    </source>
</reference>
<reference key="3">
    <citation type="submission" date="2004-07" db="EMBL/GenBank/DDBJ databases">
        <authorList>
            <consortium name="NIH - Zebrafish Gene Collection (ZGC) project"/>
        </authorList>
    </citation>
    <scope>NUCLEOTIDE SEQUENCE [LARGE SCALE MRNA]</scope>
</reference>
<reference key="4">
    <citation type="journal article" date="2013" name="J. Cell Sci.">
        <title>Six1 regulates proliferation of Pax7+ muscle progenitors in zebrafish.</title>
        <authorList>
            <person name="Nord H."/>
            <person name="Skalman L.N."/>
            <person name="von Hofsten J."/>
        </authorList>
    </citation>
    <scope>FUNCTION</scope>
    <scope>DISRUPTION PHENOTYPE</scope>
</reference>
<dbReference type="EMBL" id="EU109509">
    <property type="protein sequence ID" value="ABW83199.1"/>
    <property type="molecule type" value="mRNA"/>
</dbReference>
<dbReference type="EMBL" id="BX537123">
    <property type="status" value="NOT_ANNOTATED_CDS"/>
    <property type="molecule type" value="Genomic_DNA"/>
</dbReference>
<dbReference type="EMBL" id="BC076015">
    <property type="protein sequence ID" value="AAH76015.1"/>
    <property type="molecule type" value="mRNA"/>
</dbReference>
<dbReference type="RefSeq" id="NP_001009904.1">
    <property type="nucleotide sequence ID" value="NM_001009904.1"/>
</dbReference>
<dbReference type="SMR" id="Q6DHF9"/>
<dbReference type="FunCoup" id="Q6DHF9">
    <property type="interactions" value="13"/>
</dbReference>
<dbReference type="STRING" id="7955.ENSDARP00000057431"/>
<dbReference type="PaxDb" id="7955-ENSDARP00000057431"/>
<dbReference type="DNASU" id="494168"/>
<dbReference type="Ensembl" id="ENSDART00000057432">
    <property type="protein sequence ID" value="ENSDARP00000057431"/>
    <property type="gene ID" value="ENSDARG00000039304"/>
</dbReference>
<dbReference type="GeneID" id="494168"/>
<dbReference type="KEGG" id="dre:494168"/>
<dbReference type="AGR" id="ZFIN:ZDB-GENE-040718-155"/>
<dbReference type="CTD" id="494168"/>
<dbReference type="ZFIN" id="ZDB-GENE-040718-155">
    <property type="gene designation" value="six1a"/>
</dbReference>
<dbReference type="eggNOG" id="KOG0775">
    <property type="taxonomic scope" value="Eukaryota"/>
</dbReference>
<dbReference type="HOGENOM" id="CLU_046914_2_0_1"/>
<dbReference type="InParanoid" id="Q6DHF9"/>
<dbReference type="OMA" id="EVSCICE"/>
<dbReference type="OrthoDB" id="3501850at2759"/>
<dbReference type="PhylomeDB" id="Q6DHF9"/>
<dbReference type="TreeFam" id="TF315545"/>
<dbReference type="PRO" id="PR:Q6DHF9"/>
<dbReference type="Proteomes" id="UP000000437">
    <property type="component" value="Chromosome 13"/>
</dbReference>
<dbReference type="Bgee" id="ENSDARG00000039304">
    <property type="expression patterns" value="Expressed in muscle tissue and 23 other cell types or tissues"/>
</dbReference>
<dbReference type="GO" id="GO:0005737">
    <property type="term" value="C:cytoplasm"/>
    <property type="evidence" value="ECO:0007669"/>
    <property type="project" value="UniProtKB-SubCell"/>
</dbReference>
<dbReference type="GO" id="GO:0005634">
    <property type="term" value="C:nucleus"/>
    <property type="evidence" value="ECO:0000318"/>
    <property type="project" value="GO_Central"/>
</dbReference>
<dbReference type="GO" id="GO:0005667">
    <property type="term" value="C:transcription regulator complex"/>
    <property type="evidence" value="ECO:0000318"/>
    <property type="project" value="GO_Central"/>
</dbReference>
<dbReference type="GO" id="GO:0000981">
    <property type="term" value="F:DNA-binding transcription factor activity, RNA polymerase II-specific"/>
    <property type="evidence" value="ECO:0000315"/>
    <property type="project" value="ZFIN"/>
</dbReference>
<dbReference type="GO" id="GO:0000978">
    <property type="term" value="F:RNA polymerase II cis-regulatory region sequence-specific DNA binding"/>
    <property type="evidence" value="ECO:0000318"/>
    <property type="project" value="GO_Central"/>
</dbReference>
<dbReference type="GO" id="GO:0006915">
    <property type="term" value="P:apoptotic process"/>
    <property type="evidence" value="ECO:0007669"/>
    <property type="project" value="UniProtKB-KW"/>
</dbReference>
<dbReference type="GO" id="GO:2000980">
    <property type="term" value="P:regulation of inner ear receptor cell differentiation"/>
    <property type="evidence" value="ECO:0000315"/>
    <property type="project" value="ZFIN"/>
</dbReference>
<dbReference type="GO" id="GO:0014857">
    <property type="term" value="P:regulation of skeletal muscle cell proliferation"/>
    <property type="evidence" value="ECO:0000315"/>
    <property type="project" value="ZFIN"/>
</dbReference>
<dbReference type="GO" id="GO:0006357">
    <property type="term" value="P:regulation of transcription by RNA polymerase II"/>
    <property type="evidence" value="ECO:0000318"/>
    <property type="project" value="GO_Central"/>
</dbReference>
<dbReference type="GO" id="GO:0048741">
    <property type="term" value="P:skeletal muscle fiber development"/>
    <property type="evidence" value="ECO:0000315"/>
    <property type="project" value="ZFIN"/>
</dbReference>
<dbReference type="CDD" id="cd00086">
    <property type="entry name" value="homeodomain"/>
    <property type="match status" value="1"/>
</dbReference>
<dbReference type="FunFam" id="1.10.10.60:FF:000063">
    <property type="entry name" value="SIX homeobox 2"/>
    <property type="match status" value="1"/>
</dbReference>
<dbReference type="Gene3D" id="1.10.10.60">
    <property type="entry name" value="Homeodomain-like"/>
    <property type="match status" value="1"/>
</dbReference>
<dbReference type="InterPro" id="IPR001356">
    <property type="entry name" value="HD"/>
</dbReference>
<dbReference type="InterPro" id="IPR017970">
    <property type="entry name" value="Homeobox_CS"/>
</dbReference>
<dbReference type="InterPro" id="IPR009057">
    <property type="entry name" value="Homeodomain-like_sf"/>
</dbReference>
<dbReference type="InterPro" id="IPR008422">
    <property type="entry name" value="KN_HD"/>
</dbReference>
<dbReference type="InterPro" id="IPR031701">
    <property type="entry name" value="SIX1_SD"/>
</dbReference>
<dbReference type="PANTHER" id="PTHR10390">
    <property type="entry name" value="HOMEOBOX PROTEIN SIX"/>
    <property type="match status" value="1"/>
</dbReference>
<dbReference type="PANTHER" id="PTHR10390:SF13">
    <property type="entry name" value="HOMEOBOX PROTEIN SIX1"/>
    <property type="match status" value="1"/>
</dbReference>
<dbReference type="Pfam" id="PF05920">
    <property type="entry name" value="Homeobox_KN"/>
    <property type="match status" value="1"/>
</dbReference>
<dbReference type="Pfam" id="PF16878">
    <property type="entry name" value="SIX1_SD"/>
    <property type="match status" value="1"/>
</dbReference>
<dbReference type="SMART" id="SM00389">
    <property type="entry name" value="HOX"/>
    <property type="match status" value="1"/>
</dbReference>
<dbReference type="SUPFAM" id="SSF46689">
    <property type="entry name" value="Homeodomain-like"/>
    <property type="match status" value="1"/>
</dbReference>
<dbReference type="PROSITE" id="PS00027">
    <property type="entry name" value="HOMEOBOX_1"/>
    <property type="match status" value="1"/>
</dbReference>
<dbReference type="PROSITE" id="PS50071">
    <property type="entry name" value="HOMEOBOX_2"/>
    <property type="match status" value="1"/>
</dbReference>
<name>SIX1A_DANRE</name>
<gene>
    <name type="primary">six1a</name>
    <name type="synonym">six1b</name>
</gene>
<evidence type="ECO:0000250" key="1"/>
<evidence type="ECO:0000250" key="2">
    <source>
        <dbReference type="UniProtKB" id="Q15475"/>
    </source>
</evidence>
<evidence type="ECO:0000255" key="3">
    <source>
        <dbReference type="PROSITE-ProRule" id="PRU00108"/>
    </source>
</evidence>
<evidence type="ECO:0000256" key="4">
    <source>
        <dbReference type="SAM" id="MobiDB-lite"/>
    </source>
</evidence>
<evidence type="ECO:0000269" key="5">
    <source>
    </source>
</evidence>
<evidence type="ECO:0000269" key="6">
    <source>
    </source>
</evidence>
<evidence type="ECO:0000305" key="7"/>
<evidence type="ECO:0000305" key="8">
    <source>
    </source>
</evidence>
<proteinExistence type="evidence at transcript level"/>
<sequence>MSILPSFGFTQEQVACVCEVLQQGGNLERLGRFLWSLPACDHLHKNESVLKAKAVVAFHRGNFRELYKILESYQFSTHNHPKMQQLWLKAHYVEAEKLRGRPLGAVGKYRVRRKFPLPRTIWDGEETSYCFKEKSRSVLREWYTHNPYPSPREKRELAEATGLTTTQVSNWFKNRRQRDRAAEAKERENGENNGVGGKQSQRSPLDGVKSLMSSSEDEFSPPQSPEHSSVLLLQGTMNNPAAPAYPMPGLGAPHPLHGMQGHPHQIQDSLLGSLTSSLVDLGS</sequence>
<keyword id="KW-0010">Activator</keyword>
<keyword id="KW-0053">Apoptosis</keyword>
<keyword id="KW-0963">Cytoplasm</keyword>
<keyword id="KW-0217">Developmental protein</keyword>
<keyword id="KW-0238">DNA-binding</keyword>
<keyword id="KW-0371">Homeobox</keyword>
<keyword id="KW-0539">Nucleus</keyword>
<keyword id="KW-1185">Reference proteome</keyword>
<keyword id="KW-0678">Repressor</keyword>
<keyword id="KW-0804">Transcription</keyword>
<keyword id="KW-0805">Transcription regulation</keyword>
<feature type="chain" id="PRO_0000422773" description="Homeobox protein six1a">
    <location>
        <begin position="1"/>
        <end position="283"/>
    </location>
</feature>
<feature type="DNA-binding region" description="Homeobox" evidence="3">
    <location>
        <begin position="124"/>
        <end position="183"/>
    </location>
</feature>
<feature type="region of interest" description="Disordered" evidence="4">
    <location>
        <begin position="168"/>
        <end position="264"/>
    </location>
</feature>
<feature type="compositionally biased region" description="Basic and acidic residues" evidence="4">
    <location>
        <begin position="179"/>
        <end position="190"/>
    </location>
</feature>
<feature type="compositionally biased region" description="Low complexity" evidence="4">
    <location>
        <begin position="237"/>
        <end position="248"/>
    </location>
</feature>
<feature type="sequence conflict" description="In Ref. 1; ABW83199 and 3; AAH76015." evidence="7" ref="1 3">
    <original>A</original>
    <variation>G</variation>
    <location>
        <position position="241"/>
    </location>
</feature>
<accession>Q6DHF9</accession>
<accession>B8A5G7</accession>
<protein>
    <recommendedName>
        <fullName>Homeobox protein six1a</fullName>
    </recommendedName>
    <alternativeName>
        <fullName>Homeobox protein six1b</fullName>
    </alternativeName>
    <alternativeName>
        <fullName>Sine oculis homeobox homolog 1a</fullName>
    </alternativeName>
    <alternativeName>
        <fullName>Sine oculis homeobox homolog 1b</fullName>
    </alternativeName>
</protein>
<organism>
    <name type="scientific">Danio rerio</name>
    <name type="common">Zebrafish</name>
    <name type="synonym">Brachydanio rerio</name>
    <dbReference type="NCBI Taxonomy" id="7955"/>
    <lineage>
        <taxon>Eukaryota</taxon>
        <taxon>Metazoa</taxon>
        <taxon>Chordata</taxon>
        <taxon>Craniata</taxon>
        <taxon>Vertebrata</taxon>
        <taxon>Euteleostomi</taxon>
        <taxon>Actinopterygii</taxon>
        <taxon>Neopterygii</taxon>
        <taxon>Teleostei</taxon>
        <taxon>Ostariophysi</taxon>
        <taxon>Cypriniformes</taxon>
        <taxon>Danionidae</taxon>
        <taxon>Danioninae</taxon>
        <taxon>Danio</taxon>
    </lineage>
</organism>
<comment type="function">
    <text evidence="1 6">Transcription factor that is involved in the regulation of cell proliferation, apoptosis and embryonic development. Depending on context, functions as a transcriptional repressor or activator. Plays an important role in the development of the inner ear, where it promotes hair cell proliferation and inhibits proliferation of neural progenitor cells (By similarity). Required for normal myogenesis. Plays a role in the development of fast muscle fibers throughout the body, as well as the development of craniofacial muscles.</text>
</comment>
<comment type="subcellular location">
    <subcellularLocation>
        <location evidence="2">Nucleus</location>
    </subcellularLocation>
    <subcellularLocation>
        <location evidence="2">Cytoplasm</location>
    </subcellularLocation>
</comment>
<comment type="developmental stage">
    <text evidence="5">Ubiquitous during segmentation. Detected in otic vesicle and statoacoustic ganglion at later stages of development. At 24 hpf, detected in developing fast muscle throughout the trunk.</text>
</comment>
<comment type="disruption phenotype">
    <text evidence="6">Morpholino knockdown of the protein disrupts both skeletal muscle development in the trunk and cranial muscle development. Disrupts myogenesis by interfering with the proliferation of dermomyotomal cells expressing pax7.</text>
</comment>
<comment type="similarity">
    <text evidence="7">Belongs to the SIX/Sine oculis homeobox family.</text>
</comment>
<comment type="caution">
    <text evidence="8">Zebrafish has two genes coding for six1 orthologs. This gene is called six1a by ZFIN, but has also been described as six1b (PubMed:18789916).</text>
</comment>